<dbReference type="EC" id="4.2.1.33" evidence="2"/>
<dbReference type="EMBL" id="AE004439">
    <property type="protein sequence ID" value="AAK04044.1"/>
    <property type="molecule type" value="Genomic_DNA"/>
</dbReference>
<dbReference type="RefSeq" id="WP_010907424.1">
    <property type="nucleotide sequence ID" value="NC_002663.1"/>
</dbReference>
<dbReference type="SMR" id="Q9CJN7"/>
<dbReference type="STRING" id="272843.PM1960"/>
<dbReference type="EnsemblBacteria" id="AAK04044">
    <property type="protein sequence ID" value="AAK04044"/>
    <property type="gene ID" value="PM1960"/>
</dbReference>
<dbReference type="KEGG" id="pmu:PM1960"/>
<dbReference type="HOGENOM" id="CLU_006714_3_4_6"/>
<dbReference type="OrthoDB" id="9802769at2"/>
<dbReference type="UniPathway" id="UPA00048">
    <property type="reaction ID" value="UER00071"/>
</dbReference>
<dbReference type="Proteomes" id="UP000000809">
    <property type="component" value="Chromosome"/>
</dbReference>
<dbReference type="GO" id="GO:0003861">
    <property type="term" value="F:3-isopropylmalate dehydratase activity"/>
    <property type="evidence" value="ECO:0007669"/>
    <property type="project" value="UniProtKB-UniRule"/>
</dbReference>
<dbReference type="GO" id="GO:0051539">
    <property type="term" value="F:4 iron, 4 sulfur cluster binding"/>
    <property type="evidence" value="ECO:0007669"/>
    <property type="project" value="UniProtKB-KW"/>
</dbReference>
<dbReference type="GO" id="GO:0046872">
    <property type="term" value="F:metal ion binding"/>
    <property type="evidence" value="ECO:0007669"/>
    <property type="project" value="UniProtKB-KW"/>
</dbReference>
<dbReference type="GO" id="GO:0009098">
    <property type="term" value="P:L-leucine biosynthetic process"/>
    <property type="evidence" value="ECO:0007669"/>
    <property type="project" value="UniProtKB-UniRule"/>
</dbReference>
<dbReference type="CDD" id="cd01583">
    <property type="entry name" value="IPMI"/>
    <property type="match status" value="1"/>
</dbReference>
<dbReference type="FunFam" id="3.30.499.10:FF:000006">
    <property type="entry name" value="3-isopropylmalate dehydratase large subunit"/>
    <property type="match status" value="1"/>
</dbReference>
<dbReference type="FunFam" id="3.30.499.10:FF:000007">
    <property type="entry name" value="3-isopropylmalate dehydratase large subunit"/>
    <property type="match status" value="1"/>
</dbReference>
<dbReference type="Gene3D" id="3.30.499.10">
    <property type="entry name" value="Aconitase, domain 3"/>
    <property type="match status" value="2"/>
</dbReference>
<dbReference type="HAMAP" id="MF_01026">
    <property type="entry name" value="LeuC_type1"/>
    <property type="match status" value="1"/>
</dbReference>
<dbReference type="InterPro" id="IPR004430">
    <property type="entry name" value="3-IsopropMal_deHydase_lsu"/>
</dbReference>
<dbReference type="InterPro" id="IPR015931">
    <property type="entry name" value="Acnase/IPM_dHydase_lsu_aba_1/3"/>
</dbReference>
<dbReference type="InterPro" id="IPR001030">
    <property type="entry name" value="Acoase/IPM_deHydtase_lsu_aba"/>
</dbReference>
<dbReference type="InterPro" id="IPR018136">
    <property type="entry name" value="Aconitase_4Fe-4S_BS"/>
</dbReference>
<dbReference type="InterPro" id="IPR036008">
    <property type="entry name" value="Aconitase_4Fe-4S_dom"/>
</dbReference>
<dbReference type="InterPro" id="IPR050067">
    <property type="entry name" value="IPM_dehydratase_rel_enz"/>
</dbReference>
<dbReference type="InterPro" id="IPR033941">
    <property type="entry name" value="IPMI_cat"/>
</dbReference>
<dbReference type="NCBIfam" id="TIGR00170">
    <property type="entry name" value="leuC"/>
    <property type="match status" value="1"/>
</dbReference>
<dbReference type="NCBIfam" id="NF004016">
    <property type="entry name" value="PRK05478.1"/>
    <property type="match status" value="1"/>
</dbReference>
<dbReference type="NCBIfam" id="NF009116">
    <property type="entry name" value="PRK12466.1"/>
    <property type="match status" value="1"/>
</dbReference>
<dbReference type="PANTHER" id="PTHR43822:SF9">
    <property type="entry name" value="3-ISOPROPYLMALATE DEHYDRATASE"/>
    <property type="match status" value="1"/>
</dbReference>
<dbReference type="PANTHER" id="PTHR43822">
    <property type="entry name" value="HOMOACONITASE, MITOCHONDRIAL-RELATED"/>
    <property type="match status" value="1"/>
</dbReference>
<dbReference type="Pfam" id="PF00330">
    <property type="entry name" value="Aconitase"/>
    <property type="match status" value="1"/>
</dbReference>
<dbReference type="PRINTS" id="PR00415">
    <property type="entry name" value="ACONITASE"/>
</dbReference>
<dbReference type="SUPFAM" id="SSF53732">
    <property type="entry name" value="Aconitase iron-sulfur domain"/>
    <property type="match status" value="1"/>
</dbReference>
<dbReference type="PROSITE" id="PS00450">
    <property type="entry name" value="ACONITASE_1"/>
    <property type="match status" value="1"/>
</dbReference>
<dbReference type="PROSITE" id="PS01244">
    <property type="entry name" value="ACONITASE_2"/>
    <property type="match status" value="1"/>
</dbReference>
<organism>
    <name type="scientific">Pasteurella multocida (strain Pm70)</name>
    <dbReference type="NCBI Taxonomy" id="272843"/>
    <lineage>
        <taxon>Bacteria</taxon>
        <taxon>Pseudomonadati</taxon>
        <taxon>Pseudomonadota</taxon>
        <taxon>Gammaproteobacteria</taxon>
        <taxon>Pasteurellales</taxon>
        <taxon>Pasteurellaceae</taxon>
        <taxon>Pasteurella</taxon>
    </lineage>
</organism>
<sequence length="468" mass="50530">MSKTLYEKLFDAHVVHEANGETPLIYINRHLVHEVTSPQAFDGLRAMGRSVRQPSKTVATMDHNVPTDSRDLAGSGEMGRVQMVELAKNTEQFGITLYDINHINQGIVHVMGPEQGLTLPGMTIVCGDSHTATHGAFGALAFGIGTSEVEHVLATQTIKQARAKKMKIEVRGKVRDGISAKDIVLAIIGKTTMGGGTGHVVEFCGEAIRDLSMEGRMTVCNMAIELGAKSGIIAPDETTFAYLKDKPYAPKGKDWDEAVAYWQTLHSDEGAEFDTVVTLEASEIEPQVTWGTNPGQVIGINQPIPNPAEMSDPIERQSAEKALAYMDLPHSIKLTDVAIDKVFIGSCTNSRIEDLRAAAAIAKGRKVADGVQALVVPGSGLVREQAEKEGLDKIFIEAGFEWRLPGCSMCLAMNNDRLAPGERCASTSNRNFEGRQGRGGRTHLVSPAMAAAAAVYGKFVDIRNLELH</sequence>
<reference key="1">
    <citation type="journal article" date="2001" name="Proc. Natl. Acad. Sci. U.S.A.">
        <title>Complete genomic sequence of Pasteurella multocida Pm70.</title>
        <authorList>
            <person name="May B.J."/>
            <person name="Zhang Q."/>
            <person name="Li L.L."/>
            <person name="Paustian M.L."/>
            <person name="Whittam T.S."/>
            <person name="Kapur V."/>
        </authorList>
    </citation>
    <scope>NUCLEOTIDE SEQUENCE [LARGE SCALE GENOMIC DNA]</scope>
    <source>
        <strain>Pm70</strain>
    </source>
</reference>
<keyword id="KW-0004">4Fe-4S</keyword>
<keyword id="KW-0028">Amino-acid biosynthesis</keyword>
<keyword id="KW-0100">Branched-chain amino acid biosynthesis</keyword>
<keyword id="KW-0408">Iron</keyword>
<keyword id="KW-0411">Iron-sulfur</keyword>
<keyword id="KW-0432">Leucine biosynthesis</keyword>
<keyword id="KW-0456">Lyase</keyword>
<keyword id="KW-0479">Metal-binding</keyword>
<keyword id="KW-1185">Reference proteome</keyword>
<gene>
    <name evidence="2" type="primary">leuC</name>
    <name type="ordered locus">PM1960</name>
</gene>
<accession>Q9CJN7</accession>
<protein>
    <recommendedName>
        <fullName evidence="2">3-isopropylmalate dehydratase large subunit</fullName>
        <ecNumber evidence="2">4.2.1.33</ecNumber>
    </recommendedName>
    <alternativeName>
        <fullName evidence="2">Alpha-IPM isomerase</fullName>
        <shortName evidence="2">IPMI</shortName>
    </alternativeName>
    <alternativeName>
        <fullName evidence="2">Isopropylmalate isomerase</fullName>
    </alternativeName>
</protein>
<evidence type="ECO:0000250" key="1"/>
<evidence type="ECO:0000255" key="2">
    <source>
        <dbReference type="HAMAP-Rule" id="MF_01026"/>
    </source>
</evidence>
<evidence type="ECO:0000256" key="3">
    <source>
        <dbReference type="SAM" id="MobiDB-lite"/>
    </source>
</evidence>
<comment type="function">
    <text evidence="2">Catalyzes the isomerization between 2-isopropylmalate and 3-isopropylmalate, via the formation of 2-isopropylmaleate.</text>
</comment>
<comment type="catalytic activity">
    <reaction evidence="2">
        <text>(2R,3S)-3-isopropylmalate = (2S)-2-isopropylmalate</text>
        <dbReference type="Rhea" id="RHEA:32287"/>
        <dbReference type="ChEBI" id="CHEBI:1178"/>
        <dbReference type="ChEBI" id="CHEBI:35121"/>
        <dbReference type="EC" id="4.2.1.33"/>
    </reaction>
</comment>
<comment type="cofactor">
    <cofactor evidence="2">
        <name>[4Fe-4S] cluster</name>
        <dbReference type="ChEBI" id="CHEBI:49883"/>
    </cofactor>
    <text evidence="2">Binds 1 [4Fe-4S] cluster per subunit.</text>
</comment>
<comment type="pathway">
    <text evidence="2">Amino-acid biosynthesis; L-leucine biosynthesis; L-leucine from 3-methyl-2-oxobutanoate: step 2/4.</text>
</comment>
<comment type="subunit">
    <text evidence="2">Heterodimer of LeuC and LeuD.</text>
</comment>
<comment type="similarity">
    <text evidence="2">Belongs to the aconitase/IPM isomerase family. LeuC type 1 subfamily.</text>
</comment>
<feature type="initiator methionine" description="Removed" evidence="1">
    <location>
        <position position="1"/>
    </location>
</feature>
<feature type="chain" id="PRO_0000076775" description="3-isopropylmalate dehydratase large subunit">
    <location>
        <begin position="2"/>
        <end position="468"/>
    </location>
</feature>
<feature type="region of interest" description="Disordered" evidence="3">
    <location>
        <begin position="53"/>
        <end position="74"/>
    </location>
</feature>
<feature type="binding site" evidence="2">
    <location>
        <position position="347"/>
    </location>
    <ligand>
        <name>[4Fe-4S] cluster</name>
        <dbReference type="ChEBI" id="CHEBI:49883"/>
    </ligand>
</feature>
<feature type="binding site" evidence="2">
    <location>
        <position position="407"/>
    </location>
    <ligand>
        <name>[4Fe-4S] cluster</name>
        <dbReference type="ChEBI" id="CHEBI:49883"/>
    </ligand>
</feature>
<feature type="binding site" evidence="2">
    <location>
        <position position="410"/>
    </location>
    <ligand>
        <name>[4Fe-4S] cluster</name>
        <dbReference type="ChEBI" id="CHEBI:49883"/>
    </ligand>
</feature>
<name>LEUC_PASMU</name>
<proteinExistence type="inferred from homology"/>